<feature type="chain" id="PRO_0000063293" description="Chaperonin GroEL">
    <location>
        <begin position="1"/>
        <end position="547"/>
    </location>
</feature>
<feature type="binding site" evidence="1">
    <location>
        <begin position="30"/>
        <end position="33"/>
    </location>
    <ligand>
        <name>ATP</name>
        <dbReference type="ChEBI" id="CHEBI:30616"/>
    </ligand>
</feature>
<feature type="binding site" evidence="1">
    <location>
        <position position="51"/>
    </location>
    <ligand>
        <name>ATP</name>
        <dbReference type="ChEBI" id="CHEBI:30616"/>
    </ligand>
</feature>
<feature type="binding site" evidence="1">
    <location>
        <begin position="87"/>
        <end position="91"/>
    </location>
    <ligand>
        <name>ATP</name>
        <dbReference type="ChEBI" id="CHEBI:30616"/>
    </ligand>
</feature>
<feature type="binding site" evidence="1">
    <location>
        <position position="415"/>
    </location>
    <ligand>
        <name>ATP</name>
        <dbReference type="ChEBI" id="CHEBI:30616"/>
    </ligand>
</feature>
<feature type="binding site" evidence="1">
    <location>
        <begin position="479"/>
        <end position="481"/>
    </location>
    <ligand>
        <name>ATP</name>
        <dbReference type="ChEBI" id="CHEBI:30616"/>
    </ligand>
</feature>
<feature type="binding site" evidence="1">
    <location>
        <position position="495"/>
    </location>
    <ligand>
        <name>ATP</name>
        <dbReference type="ChEBI" id="CHEBI:30616"/>
    </ligand>
</feature>
<keyword id="KW-0067">ATP-binding</keyword>
<keyword id="KW-0143">Chaperone</keyword>
<keyword id="KW-0963">Cytoplasm</keyword>
<keyword id="KW-0413">Isomerase</keyword>
<keyword id="KW-0547">Nucleotide-binding</keyword>
<keyword id="KW-1185">Reference proteome</keyword>
<name>CH60_BORPE</name>
<comment type="function">
    <text evidence="1">Together with its co-chaperonin GroES, plays an essential role in assisting protein folding. The GroEL-GroES system forms a nano-cage that allows encapsulation of the non-native substrate proteins and provides a physical environment optimized to promote and accelerate protein folding.</text>
</comment>
<comment type="catalytic activity">
    <reaction evidence="1">
        <text>ATP + H2O + a folded polypeptide = ADP + phosphate + an unfolded polypeptide.</text>
        <dbReference type="EC" id="5.6.1.7"/>
    </reaction>
</comment>
<comment type="subunit">
    <text evidence="1">Forms a cylinder of 14 subunits composed of two heptameric rings stacked back-to-back. Interacts with the co-chaperonin GroES.</text>
</comment>
<comment type="subcellular location">
    <subcellularLocation>
        <location evidence="1">Cytoplasm</location>
    </subcellularLocation>
</comment>
<comment type="similarity">
    <text evidence="1">Belongs to the chaperonin (HSP60) family.</text>
</comment>
<evidence type="ECO:0000255" key="1">
    <source>
        <dbReference type="HAMAP-Rule" id="MF_00600"/>
    </source>
</evidence>
<dbReference type="EC" id="5.6.1.7" evidence="1"/>
<dbReference type="EMBL" id="U12277">
    <property type="protein sequence ID" value="AAA74967.1"/>
    <property type="molecule type" value="Genomic_DNA"/>
</dbReference>
<dbReference type="EMBL" id="BX640421">
    <property type="protein sequence ID" value="CAE43756.1"/>
    <property type="molecule type" value="Genomic_DNA"/>
</dbReference>
<dbReference type="PIR" id="I40331">
    <property type="entry name" value="I40331"/>
</dbReference>
<dbReference type="RefSeq" id="NP_882014.1">
    <property type="nucleotide sequence ID" value="NC_002929.2"/>
</dbReference>
<dbReference type="RefSeq" id="WP_010931507.1">
    <property type="nucleotide sequence ID" value="NZ_CP039022.1"/>
</dbReference>
<dbReference type="SMR" id="P48210"/>
<dbReference type="STRING" id="257313.BP3495"/>
<dbReference type="PaxDb" id="257313-BP3495"/>
<dbReference type="GeneID" id="69600506"/>
<dbReference type="KEGG" id="bpe:BP3495"/>
<dbReference type="PATRIC" id="fig|257313.5.peg.3784"/>
<dbReference type="eggNOG" id="COG0459">
    <property type="taxonomic scope" value="Bacteria"/>
</dbReference>
<dbReference type="HOGENOM" id="CLU_016503_3_0_4"/>
<dbReference type="Proteomes" id="UP000002676">
    <property type="component" value="Chromosome"/>
</dbReference>
<dbReference type="GO" id="GO:0005737">
    <property type="term" value="C:cytoplasm"/>
    <property type="evidence" value="ECO:0007669"/>
    <property type="project" value="UniProtKB-SubCell"/>
</dbReference>
<dbReference type="GO" id="GO:0005524">
    <property type="term" value="F:ATP binding"/>
    <property type="evidence" value="ECO:0007669"/>
    <property type="project" value="UniProtKB-UniRule"/>
</dbReference>
<dbReference type="GO" id="GO:0140662">
    <property type="term" value="F:ATP-dependent protein folding chaperone"/>
    <property type="evidence" value="ECO:0007669"/>
    <property type="project" value="InterPro"/>
</dbReference>
<dbReference type="GO" id="GO:0016853">
    <property type="term" value="F:isomerase activity"/>
    <property type="evidence" value="ECO:0007669"/>
    <property type="project" value="UniProtKB-KW"/>
</dbReference>
<dbReference type="GO" id="GO:0051082">
    <property type="term" value="F:unfolded protein binding"/>
    <property type="evidence" value="ECO:0007669"/>
    <property type="project" value="UniProtKB-UniRule"/>
</dbReference>
<dbReference type="GO" id="GO:0042026">
    <property type="term" value="P:protein refolding"/>
    <property type="evidence" value="ECO:0007669"/>
    <property type="project" value="UniProtKB-UniRule"/>
</dbReference>
<dbReference type="CDD" id="cd03344">
    <property type="entry name" value="GroEL"/>
    <property type="match status" value="1"/>
</dbReference>
<dbReference type="FunFam" id="1.10.560.10:FF:000001">
    <property type="entry name" value="60 kDa chaperonin"/>
    <property type="match status" value="1"/>
</dbReference>
<dbReference type="FunFam" id="3.50.7.10:FF:000001">
    <property type="entry name" value="60 kDa chaperonin"/>
    <property type="match status" value="1"/>
</dbReference>
<dbReference type="Gene3D" id="3.50.7.10">
    <property type="entry name" value="GroEL"/>
    <property type="match status" value="1"/>
</dbReference>
<dbReference type="Gene3D" id="1.10.560.10">
    <property type="entry name" value="GroEL-like equatorial domain"/>
    <property type="match status" value="1"/>
</dbReference>
<dbReference type="Gene3D" id="3.30.260.10">
    <property type="entry name" value="TCP-1-like chaperonin intermediate domain"/>
    <property type="match status" value="1"/>
</dbReference>
<dbReference type="HAMAP" id="MF_00600">
    <property type="entry name" value="CH60"/>
    <property type="match status" value="1"/>
</dbReference>
<dbReference type="InterPro" id="IPR018370">
    <property type="entry name" value="Chaperonin_Cpn60_CS"/>
</dbReference>
<dbReference type="InterPro" id="IPR001844">
    <property type="entry name" value="Cpn60/GroEL"/>
</dbReference>
<dbReference type="InterPro" id="IPR002423">
    <property type="entry name" value="Cpn60/GroEL/TCP-1"/>
</dbReference>
<dbReference type="InterPro" id="IPR027409">
    <property type="entry name" value="GroEL-like_apical_dom_sf"/>
</dbReference>
<dbReference type="InterPro" id="IPR027413">
    <property type="entry name" value="GROEL-like_equatorial_sf"/>
</dbReference>
<dbReference type="InterPro" id="IPR027410">
    <property type="entry name" value="TCP-1-like_intermed_sf"/>
</dbReference>
<dbReference type="NCBIfam" id="TIGR02348">
    <property type="entry name" value="GroEL"/>
    <property type="match status" value="1"/>
</dbReference>
<dbReference type="NCBIfam" id="NF000592">
    <property type="entry name" value="PRK00013.1"/>
    <property type="match status" value="1"/>
</dbReference>
<dbReference type="NCBIfam" id="NF009487">
    <property type="entry name" value="PRK12849.1"/>
    <property type="match status" value="1"/>
</dbReference>
<dbReference type="NCBIfam" id="NF009488">
    <property type="entry name" value="PRK12850.1"/>
    <property type="match status" value="1"/>
</dbReference>
<dbReference type="NCBIfam" id="NF009489">
    <property type="entry name" value="PRK12851.1"/>
    <property type="match status" value="1"/>
</dbReference>
<dbReference type="PANTHER" id="PTHR45633">
    <property type="entry name" value="60 KDA HEAT SHOCK PROTEIN, MITOCHONDRIAL"/>
    <property type="match status" value="1"/>
</dbReference>
<dbReference type="Pfam" id="PF00118">
    <property type="entry name" value="Cpn60_TCP1"/>
    <property type="match status" value="1"/>
</dbReference>
<dbReference type="PRINTS" id="PR00298">
    <property type="entry name" value="CHAPERONIN60"/>
</dbReference>
<dbReference type="SUPFAM" id="SSF52029">
    <property type="entry name" value="GroEL apical domain-like"/>
    <property type="match status" value="1"/>
</dbReference>
<dbReference type="SUPFAM" id="SSF48592">
    <property type="entry name" value="GroEL equatorial domain-like"/>
    <property type="match status" value="1"/>
</dbReference>
<dbReference type="SUPFAM" id="SSF54849">
    <property type="entry name" value="GroEL-intermediate domain like"/>
    <property type="match status" value="1"/>
</dbReference>
<dbReference type="PROSITE" id="PS00296">
    <property type="entry name" value="CHAPERONINS_CPN60"/>
    <property type="match status" value="1"/>
</dbReference>
<organism>
    <name type="scientific">Bordetella pertussis (strain Tohama I / ATCC BAA-589 / NCTC 13251)</name>
    <dbReference type="NCBI Taxonomy" id="257313"/>
    <lineage>
        <taxon>Bacteria</taxon>
        <taxon>Pseudomonadati</taxon>
        <taxon>Pseudomonadota</taxon>
        <taxon>Betaproteobacteria</taxon>
        <taxon>Burkholderiales</taxon>
        <taxon>Alcaligenaceae</taxon>
        <taxon>Bordetella</taxon>
    </lineage>
</organism>
<gene>
    <name evidence="1" type="primary">groEL</name>
    <name type="synonym">cpn60</name>
    <name evidence="1" type="synonym">groL</name>
    <name type="synonym">mopA</name>
    <name type="ordered locus">BP3495</name>
</gene>
<protein>
    <recommendedName>
        <fullName evidence="1">Chaperonin GroEL</fullName>
        <ecNumber evidence="1">5.6.1.7</ecNumber>
    </recommendedName>
    <alternativeName>
        <fullName evidence="1">60 kDa chaperonin</fullName>
    </alternativeName>
    <alternativeName>
        <fullName evidence="1">Chaperonin-60</fullName>
        <shortName evidence="1">Cpn60</shortName>
    </alternativeName>
</protein>
<sequence length="547" mass="57482">MAAKQVLFADEARVRIVRGVNVLANAVKTTLGPKGRNVVLERSFGAPTVTKDGVSVAKEIELKDKFENIGAQLVKDVASKTSDNAGDGTTTATVLAQAVVQEGLKYVAAGFNPIDLKRGIDKAVAAAVEELKKLSKPVTTSKEIAQVGSISANSDASIGQIIADAMDKVGKEGVITVEDGKSLENELDVVEGMQFDRGYLSPYFINSPEKQVAALDDPYVLIYDKKVSNIRDLLPVLEQVAKSSRPLLIIAEDVEGEALATLVVNNIRGILKTTAVKAPGFGDRRKAMLEDIAILTGGTVISEETGMSLEKATLQDLGQAKRIEVAKENTTIIDGAGDGKSIEARVKQIRAQIEEATSDYDREKLQERVAKLAGGVAVIRVGAATEVEMKEKKARVEDALHATRAAVEEGVVPGGGVALLRAKQAITGLKGDTADQNAGIKLILRAVEEPLRTIVTNAGDEASVVVNTVLNGKGNYGYNAATGEYGDLVEQGVLDPTKVTRTALQNAASVASLLLTAEAAVVELMENKPAAAPAMPGGMGGMGGMDF</sequence>
<accession>P48210</accession>
<reference key="1">
    <citation type="journal article" date="1995" name="Gene">
        <title>Cloning and sequencing of the Bordetella pertussis cpn10/cpn60 (groESL) homolog.</title>
        <authorList>
            <person name="Fernandez R.C."/>
            <person name="Weiss A.A."/>
        </authorList>
    </citation>
    <scope>NUCLEOTIDE SEQUENCE [GENOMIC DNA]</scope>
    <source>
        <strain>Tohama I / BP338</strain>
    </source>
</reference>
<reference key="2">
    <citation type="journal article" date="2003" name="Nat. Genet.">
        <title>Comparative analysis of the genome sequences of Bordetella pertussis, Bordetella parapertussis and Bordetella bronchiseptica.</title>
        <authorList>
            <person name="Parkhill J."/>
            <person name="Sebaihia M."/>
            <person name="Preston A."/>
            <person name="Murphy L.D."/>
            <person name="Thomson N.R."/>
            <person name="Harris D.E."/>
            <person name="Holden M.T.G."/>
            <person name="Churcher C.M."/>
            <person name="Bentley S.D."/>
            <person name="Mungall K.L."/>
            <person name="Cerdeno-Tarraga A.-M."/>
            <person name="Temple L."/>
            <person name="James K.D."/>
            <person name="Harris B."/>
            <person name="Quail M.A."/>
            <person name="Achtman M."/>
            <person name="Atkin R."/>
            <person name="Baker S."/>
            <person name="Basham D."/>
            <person name="Bason N."/>
            <person name="Cherevach I."/>
            <person name="Chillingworth T."/>
            <person name="Collins M."/>
            <person name="Cronin A."/>
            <person name="Davis P."/>
            <person name="Doggett J."/>
            <person name="Feltwell T."/>
            <person name="Goble A."/>
            <person name="Hamlin N."/>
            <person name="Hauser H."/>
            <person name="Holroyd S."/>
            <person name="Jagels K."/>
            <person name="Leather S."/>
            <person name="Moule S."/>
            <person name="Norberczak H."/>
            <person name="O'Neil S."/>
            <person name="Ormond D."/>
            <person name="Price C."/>
            <person name="Rabbinowitsch E."/>
            <person name="Rutter S."/>
            <person name="Sanders M."/>
            <person name="Saunders D."/>
            <person name="Seeger K."/>
            <person name="Sharp S."/>
            <person name="Simmonds M."/>
            <person name="Skelton J."/>
            <person name="Squares R."/>
            <person name="Squares S."/>
            <person name="Stevens K."/>
            <person name="Unwin L."/>
            <person name="Whitehead S."/>
            <person name="Barrell B.G."/>
            <person name="Maskell D.J."/>
        </authorList>
    </citation>
    <scope>NUCLEOTIDE SEQUENCE [LARGE SCALE GENOMIC DNA]</scope>
    <source>
        <strain>Tohama I / ATCC BAA-589 / NCTC 13251</strain>
    </source>
</reference>
<proteinExistence type="inferred from homology"/>